<gene>
    <name type="primary">RABG3C</name>
    <name type="synonym">RAB73</name>
    <name type="synonym">RAB7D</name>
    <name type="ordered locus">At3g16100</name>
    <name type="ORF">MSL1.14</name>
</gene>
<proteinExistence type="evidence at transcript level"/>
<reference key="1">
    <citation type="submission" date="2001-09" db="EMBL/GenBank/DDBJ databases">
        <title>Rab7 homologs in Arabidopsis thaliana.</title>
        <authorList>
            <person name="Ueda T."/>
            <person name="Wada Y."/>
            <person name="Nakano A."/>
        </authorList>
    </citation>
    <scope>NUCLEOTIDE SEQUENCE [MRNA]</scope>
</reference>
<reference key="2">
    <citation type="journal article" date="2000" name="DNA Res.">
        <title>Structural analysis of Arabidopsis thaliana chromosome 3. I. Sequence features of the regions of 4,504,864 bp covered by sixty P1 and TAC clones.</title>
        <authorList>
            <person name="Sato S."/>
            <person name="Nakamura Y."/>
            <person name="Kaneko T."/>
            <person name="Katoh T."/>
            <person name="Asamizu E."/>
            <person name="Tabata S."/>
        </authorList>
    </citation>
    <scope>NUCLEOTIDE SEQUENCE [LARGE SCALE GENOMIC DNA]</scope>
    <source>
        <strain>cv. Columbia</strain>
    </source>
</reference>
<reference key="3">
    <citation type="journal article" date="2017" name="Plant J.">
        <title>Araport11: a complete reannotation of the Arabidopsis thaliana reference genome.</title>
        <authorList>
            <person name="Cheng C.Y."/>
            <person name="Krishnakumar V."/>
            <person name="Chan A.P."/>
            <person name="Thibaud-Nissen F."/>
            <person name="Schobel S."/>
            <person name="Town C.D."/>
        </authorList>
    </citation>
    <scope>GENOME REANNOTATION</scope>
    <source>
        <strain>cv. Columbia</strain>
    </source>
</reference>
<reference key="4">
    <citation type="journal article" date="2003" name="Science">
        <title>Empirical analysis of transcriptional activity in the Arabidopsis genome.</title>
        <authorList>
            <person name="Yamada K."/>
            <person name="Lim J."/>
            <person name="Dale J.M."/>
            <person name="Chen H."/>
            <person name="Shinn P."/>
            <person name="Palm C.J."/>
            <person name="Southwick A.M."/>
            <person name="Wu H.C."/>
            <person name="Kim C.J."/>
            <person name="Nguyen M."/>
            <person name="Pham P.K."/>
            <person name="Cheuk R.F."/>
            <person name="Karlin-Newmann G."/>
            <person name="Liu S.X."/>
            <person name="Lam B."/>
            <person name="Sakano H."/>
            <person name="Wu T."/>
            <person name="Yu G."/>
            <person name="Miranda M."/>
            <person name="Quach H.L."/>
            <person name="Tripp M."/>
            <person name="Chang C.H."/>
            <person name="Lee J.M."/>
            <person name="Toriumi M.J."/>
            <person name="Chan M.M."/>
            <person name="Tang C.C."/>
            <person name="Onodera C.S."/>
            <person name="Deng J.M."/>
            <person name="Akiyama K."/>
            <person name="Ansari Y."/>
            <person name="Arakawa T."/>
            <person name="Banh J."/>
            <person name="Banno F."/>
            <person name="Bowser L."/>
            <person name="Brooks S.Y."/>
            <person name="Carninci P."/>
            <person name="Chao Q."/>
            <person name="Choy N."/>
            <person name="Enju A."/>
            <person name="Goldsmith A.D."/>
            <person name="Gurjal M."/>
            <person name="Hansen N.F."/>
            <person name="Hayashizaki Y."/>
            <person name="Johnson-Hopson C."/>
            <person name="Hsuan V.W."/>
            <person name="Iida K."/>
            <person name="Karnes M."/>
            <person name="Khan S."/>
            <person name="Koesema E."/>
            <person name="Ishida J."/>
            <person name="Jiang P.X."/>
            <person name="Jones T."/>
            <person name="Kawai J."/>
            <person name="Kamiya A."/>
            <person name="Meyers C."/>
            <person name="Nakajima M."/>
            <person name="Narusaka M."/>
            <person name="Seki M."/>
            <person name="Sakurai T."/>
            <person name="Satou M."/>
            <person name="Tamse R."/>
            <person name="Vaysberg M."/>
            <person name="Wallender E.K."/>
            <person name="Wong C."/>
            <person name="Yamamura Y."/>
            <person name="Yuan S."/>
            <person name="Shinozaki K."/>
            <person name="Davis R.W."/>
            <person name="Theologis A."/>
            <person name="Ecker J.R."/>
        </authorList>
    </citation>
    <scope>NUCLEOTIDE SEQUENCE [LARGE SCALE MRNA]</scope>
    <source>
        <strain>cv. Columbia</strain>
    </source>
</reference>
<reference key="5">
    <citation type="submission" date="2006-07" db="EMBL/GenBank/DDBJ databases">
        <title>Large-scale analysis of RIKEN Arabidopsis full-length (RAFL) cDNAs.</title>
        <authorList>
            <person name="Totoki Y."/>
            <person name="Seki M."/>
            <person name="Ishida J."/>
            <person name="Nakajima M."/>
            <person name="Enju A."/>
            <person name="Kamiya A."/>
            <person name="Narusaka M."/>
            <person name="Shin-i T."/>
            <person name="Nakagawa M."/>
            <person name="Sakamoto N."/>
            <person name="Oishi K."/>
            <person name="Kohara Y."/>
            <person name="Kobayashi M."/>
            <person name="Toyoda A."/>
            <person name="Sakaki Y."/>
            <person name="Sakurai T."/>
            <person name="Iida K."/>
            <person name="Akiyama K."/>
            <person name="Satou M."/>
            <person name="Toyoda T."/>
            <person name="Konagaya A."/>
            <person name="Carninci P."/>
            <person name="Kawai J."/>
            <person name="Hayashizaki Y."/>
            <person name="Shinozaki K."/>
        </authorList>
    </citation>
    <scope>NUCLEOTIDE SEQUENCE [LARGE SCALE MRNA]</scope>
    <source>
        <strain>cv. Columbia</strain>
    </source>
</reference>
<reference key="6">
    <citation type="submission" date="2002-03" db="EMBL/GenBank/DDBJ databases">
        <title>Full-length cDNA from Arabidopsis thaliana.</title>
        <authorList>
            <person name="Brover V.V."/>
            <person name="Troukhan M.E."/>
            <person name="Alexandrov N.A."/>
            <person name="Lu Y.-P."/>
            <person name="Flavell R.B."/>
            <person name="Feldmann K.A."/>
        </authorList>
    </citation>
    <scope>NUCLEOTIDE SEQUENCE [LARGE SCALE MRNA]</scope>
</reference>
<reference key="7">
    <citation type="journal article" date="2003" name="Plant Physiol.">
        <title>Analysis of the small GTPase gene superfamily of Arabidopsis.</title>
        <authorList>
            <person name="Vernoud V."/>
            <person name="Horton A.C."/>
            <person name="Yang Z."/>
            <person name="Nielsen E."/>
        </authorList>
    </citation>
    <scope>GENE FAMILY</scope>
    <scope>NOMENCLATURE</scope>
</reference>
<sequence length="206" mass="22966">MASRRRVLLKVIILGDSGVGKTSLMNQFVNRKFSNQYKATIGADFLTKEVQIDDRIFTLQIWDTAGQERFQSLGVAFYRGADCCVLVNDVNVMKSFENLNNWREEFLIQASPSDPENFPFVVLGNKTDVDGGKSRVVTEKKAKSWCASKGNIPYFETSAKDGVNVDAAFECIAKNALKNEPEEEVYLPDTIDVAGARQQRSTGCEC</sequence>
<protein>
    <recommendedName>
        <fullName>Ras-related protein RABG3c</fullName>
        <shortName>AtRABG3c</shortName>
    </recommendedName>
    <alternativeName>
        <fullName>Ras-related protein Rab73</fullName>
        <shortName>AtRab73</shortName>
    </alternativeName>
    <alternativeName>
        <fullName>Ras-related protein Rab7D</fullName>
        <shortName>AtRab7D</shortName>
    </alternativeName>
</protein>
<dbReference type="EMBL" id="AB071848">
    <property type="protein sequence ID" value="BAB68373.1"/>
    <property type="molecule type" value="mRNA"/>
</dbReference>
<dbReference type="EMBL" id="AB012247">
    <property type="protein sequence ID" value="BAB02676.1"/>
    <property type="molecule type" value="Genomic_DNA"/>
</dbReference>
<dbReference type="EMBL" id="CP002686">
    <property type="protein sequence ID" value="AEE75771.1"/>
    <property type="molecule type" value="Genomic_DNA"/>
</dbReference>
<dbReference type="EMBL" id="BT006376">
    <property type="protein sequence ID" value="AAP21184.1"/>
    <property type="molecule type" value="mRNA"/>
</dbReference>
<dbReference type="EMBL" id="AK227936">
    <property type="protein sequence ID" value="BAE99904.1"/>
    <property type="molecule type" value="mRNA"/>
</dbReference>
<dbReference type="EMBL" id="AY084691">
    <property type="protein sequence ID" value="AAM61253.1"/>
    <property type="molecule type" value="mRNA"/>
</dbReference>
<dbReference type="RefSeq" id="NP_188231.1">
    <property type="nucleotide sequence ID" value="NM_112480.4"/>
</dbReference>
<dbReference type="SMR" id="Q9LW76"/>
<dbReference type="FunCoup" id="Q9LW76">
    <property type="interactions" value="3963"/>
</dbReference>
<dbReference type="STRING" id="3702.Q9LW76"/>
<dbReference type="iPTMnet" id="Q9LW76"/>
<dbReference type="PaxDb" id="3702-AT3G16100.1"/>
<dbReference type="ProteomicsDB" id="234991"/>
<dbReference type="EnsemblPlants" id="AT3G16100.1">
    <property type="protein sequence ID" value="AT3G16100.1"/>
    <property type="gene ID" value="AT3G16100"/>
</dbReference>
<dbReference type="GeneID" id="820855"/>
<dbReference type="Gramene" id="AT3G16100.1">
    <property type="protein sequence ID" value="AT3G16100.1"/>
    <property type="gene ID" value="AT3G16100"/>
</dbReference>
<dbReference type="KEGG" id="ath:AT3G16100"/>
<dbReference type="Araport" id="AT3G16100"/>
<dbReference type="TAIR" id="AT3G16100">
    <property type="gene designation" value="RABG3C"/>
</dbReference>
<dbReference type="eggNOG" id="KOG0394">
    <property type="taxonomic scope" value="Eukaryota"/>
</dbReference>
<dbReference type="HOGENOM" id="CLU_041217_10_6_1"/>
<dbReference type="InParanoid" id="Q9LW76"/>
<dbReference type="OMA" id="CALIVYS"/>
<dbReference type="OrthoDB" id="1436450at2759"/>
<dbReference type="PhylomeDB" id="Q9LW76"/>
<dbReference type="PRO" id="PR:Q9LW76"/>
<dbReference type="Proteomes" id="UP000006548">
    <property type="component" value="Chromosome 3"/>
</dbReference>
<dbReference type="ExpressionAtlas" id="Q9LW76">
    <property type="expression patterns" value="baseline and differential"/>
</dbReference>
<dbReference type="GO" id="GO:0005829">
    <property type="term" value="C:cytosol"/>
    <property type="evidence" value="ECO:0007005"/>
    <property type="project" value="TAIR"/>
</dbReference>
<dbReference type="GO" id="GO:0005794">
    <property type="term" value="C:Golgi apparatus"/>
    <property type="evidence" value="ECO:0007005"/>
    <property type="project" value="TAIR"/>
</dbReference>
<dbReference type="GO" id="GO:0005634">
    <property type="term" value="C:nucleus"/>
    <property type="evidence" value="ECO:0007005"/>
    <property type="project" value="TAIR"/>
</dbReference>
<dbReference type="GO" id="GO:0005886">
    <property type="term" value="C:plasma membrane"/>
    <property type="evidence" value="ECO:0007669"/>
    <property type="project" value="UniProtKB-SubCell"/>
</dbReference>
<dbReference type="GO" id="GO:0005525">
    <property type="term" value="F:GTP binding"/>
    <property type="evidence" value="ECO:0007669"/>
    <property type="project" value="UniProtKB-KW"/>
</dbReference>
<dbReference type="GO" id="GO:0003924">
    <property type="term" value="F:GTPase activity"/>
    <property type="evidence" value="ECO:0007669"/>
    <property type="project" value="InterPro"/>
</dbReference>
<dbReference type="GO" id="GO:0015031">
    <property type="term" value="P:protein transport"/>
    <property type="evidence" value="ECO:0007669"/>
    <property type="project" value="UniProtKB-KW"/>
</dbReference>
<dbReference type="CDD" id="cd01862">
    <property type="entry name" value="Rab7"/>
    <property type="match status" value="1"/>
</dbReference>
<dbReference type="FunFam" id="3.40.50.300:FF:000295">
    <property type="entry name" value="Ras-related protein Rab7"/>
    <property type="match status" value="1"/>
</dbReference>
<dbReference type="Gene3D" id="3.40.50.300">
    <property type="entry name" value="P-loop containing nucleotide triphosphate hydrolases"/>
    <property type="match status" value="1"/>
</dbReference>
<dbReference type="InterPro" id="IPR027417">
    <property type="entry name" value="P-loop_NTPase"/>
</dbReference>
<dbReference type="InterPro" id="IPR005225">
    <property type="entry name" value="Small_GTP-bd"/>
</dbReference>
<dbReference type="InterPro" id="IPR001806">
    <property type="entry name" value="Small_GTPase"/>
</dbReference>
<dbReference type="NCBIfam" id="TIGR00231">
    <property type="entry name" value="small_GTP"/>
    <property type="match status" value="1"/>
</dbReference>
<dbReference type="PANTHER" id="PTHR47981">
    <property type="entry name" value="RAB FAMILY"/>
    <property type="match status" value="1"/>
</dbReference>
<dbReference type="PANTHER" id="PTHR47981:SF44">
    <property type="entry name" value="RAS-RELATED PROTEIN RABG3C-RELATED"/>
    <property type="match status" value="1"/>
</dbReference>
<dbReference type="Pfam" id="PF00071">
    <property type="entry name" value="Ras"/>
    <property type="match status" value="1"/>
</dbReference>
<dbReference type="PRINTS" id="PR00449">
    <property type="entry name" value="RASTRNSFRMNG"/>
</dbReference>
<dbReference type="SMART" id="SM00175">
    <property type="entry name" value="RAB"/>
    <property type="match status" value="1"/>
</dbReference>
<dbReference type="SMART" id="SM00176">
    <property type="entry name" value="RAN"/>
    <property type="match status" value="1"/>
</dbReference>
<dbReference type="SMART" id="SM00173">
    <property type="entry name" value="RAS"/>
    <property type="match status" value="1"/>
</dbReference>
<dbReference type="SMART" id="SM00174">
    <property type="entry name" value="RHO"/>
    <property type="match status" value="1"/>
</dbReference>
<dbReference type="SUPFAM" id="SSF52540">
    <property type="entry name" value="P-loop containing nucleoside triphosphate hydrolases"/>
    <property type="match status" value="1"/>
</dbReference>
<dbReference type="PROSITE" id="PS51419">
    <property type="entry name" value="RAB"/>
    <property type="match status" value="1"/>
</dbReference>
<comment type="function">
    <text evidence="1">Intracellular vesicle trafficking and protein transport.</text>
</comment>
<comment type="subcellular location">
    <subcellularLocation>
        <location evidence="2">Cell membrane</location>
        <topology evidence="2">Lipid-anchor</topology>
        <orientation evidence="2">Cytoplasmic side</orientation>
    </subcellularLocation>
</comment>
<comment type="similarity">
    <text evidence="2">Belongs to the small GTPase superfamily. Rab family.</text>
</comment>
<accession>Q9LW76</accession>
<organism>
    <name type="scientific">Arabidopsis thaliana</name>
    <name type="common">Mouse-ear cress</name>
    <dbReference type="NCBI Taxonomy" id="3702"/>
    <lineage>
        <taxon>Eukaryota</taxon>
        <taxon>Viridiplantae</taxon>
        <taxon>Streptophyta</taxon>
        <taxon>Embryophyta</taxon>
        <taxon>Tracheophyta</taxon>
        <taxon>Spermatophyta</taxon>
        <taxon>Magnoliopsida</taxon>
        <taxon>eudicotyledons</taxon>
        <taxon>Gunneridae</taxon>
        <taxon>Pentapetalae</taxon>
        <taxon>rosids</taxon>
        <taxon>malvids</taxon>
        <taxon>Brassicales</taxon>
        <taxon>Brassicaceae</taxon>
        <taxon>Camelineae</taxon>
        <taxon>Arabidopsis</taxon>
    </lineage>
</organism>
<name>RAG3C_ARATH</name>
<feature type="chain" id="PRO_0000407363" description="Ras-related protein RABG3c">
    <location>
        <begin position="1"/>
        <end position="206"/>
    </location>
</feature>
<feature type="short sequence motif" description="Effector region" evidence="1">
    <location>
        <begin position="37"/>
        <end position="45"/>
    </location>
</feature>
<feature type="binding site" evidence="1">
    <location>
        <begin position="15"/>
        <end position="22"/>
    </location>
    <ligand>
        <name>GTP</name>
        <dbReference type="ChEBI" id="CHEBI:37565"/>
    </ligand>
</feature>
<feature type="binding site" evidence="1">
    <location>
        <begin position="63"/>
        <end position="67"/>
    </location>
    <ligand>
        <name>GTP</name>
        <dbReference type="ChEBI" id="CHEBI:37565"/>
    </ligand>
</feature>
<feature type="binding site" evidence="1">
    <location>
        <begin position="125"/>
        <end position="128"/>
    </location>
    <ligand>
        <name>GTP</name>
        <dbReference type="ChEBI" id="CHEBI:37565"/>
    </ligand>
</feature>
<feature type="binding site" evidence="1">
    <location>
        <begin position="158"/>
        <end position="159"/>
    </location>
    <ligand>
        <name>GTP</name>
        <dbReference type="ChEBI" id="CHEBI:37565"/>
    </ligand>
</feature>
<feature type="modified residue" description="Cysteine methyl ester" evidence="1">
    <location>
        <position position="206"/>
    </location>
</feature>
<feature type="lipid moiety-binding region" description="S-geranylgeranyl cysteine" evidence="1">
    <location>
        <position position="204"/>
    </location>
</feature>
<feature type="lipid moiety-binding region" description="S-geranylgeranyl cysteine" evidence="1">
    <location>
        <position position="206"/>
    </location>
</feature>
<evidence type="ECO:0000250" key="1"/>
<evidence type="ECO:0000305" key="2"/>
<keyword id="KW-1003">Cell membrane</keyword>
<keyword id="KW-0342">GTP-binding</keyword>
<keyword id="KW-0449">Lipoprotein</keyword>
<keyword id="KW-0472">Membrane</keyword>
<keyword id="KW-0488">Methylation</keyword>
<keyword id="KW-0547">Nucleotide-binding</keyword>
<keyword id="KW-0636">Prenylation</keyword>
<keyword id="KW-0653">Protein transport</keyword>
<keyword id="KW-1185">Reference proteome</keyword>
<keyword id="KW-0813">Transport</keyword>